<evidence type="ECO:0000250" key="1">
    <source>
        <dbReference type="UniProtKB" id="P00639"/>
    </source>
</evidence>
<evidence type="ECO:0000250" key="2">
    <source>
        <dbReference type="UniProtKB" id="P21704"/>
    </source>
</evidence>
<evidence type="ECO:0000250" key="3">
    <source>
        <dbReference type="UniProtKB" id="P24855"/>
    </source>
</evidence>
<evidence type="ECO:0000255" key="4"/>
<evidence type="ECO:0000269" key="5">
    <source>
    </source>
</evidence>
<evidence type="ECO:0000269" key="6">
    <source>
    </source>
</evidence>
<evidence type="ECO:0000269" key="7">
    <source>
    </source>
</evidence>
<evidence type="ECO:0000269" key="8">
    <source>
    </source>
</evidence>
<evidence type="ECO:0000269" key="9">
    <source>
    </source>
</evidence>
<evidence type="ECO:0000305" key="10"/>
<evidence type="ECO:0000312" key="11">
    <source>
        <dbReference type="MGI" id="MGI:103157"/>
    </source>
</evidence>
<accession>P49183</accession>
<accession>O70532</accession>
<dbReference type="EC" id="3.1.21.1" evidence="3"/>
<dbReference type="EMBL" id="U00478">
    <property type="protein sequence ID" value="AAA03710.1"/>
    <property type="molecule type" value="mRNA"/>
</dbReference>
<dbReference type="EMBL" id="D83038">
    <property type="protein sequence ID" value="BAA28622.1"/>
    <property type="molecule type" value="mRNA"/>
</dbReference>
<dbReference type="CCDS" id="CCDS27913.1"/>
<dbReference type="PIR" id="JC2526">
    <property type="entry name" value="JC2526"/>
</dbReference>
<dbReference type="RefSeq" id="NP_001344072.1">
    <property type="nucleotide sequence ID" value="NM_001357143.2"/>
</dbReference>
<dbReference type="RefSeq" id="NP_001403712.1">
    <property type="nucleotide sequence ID" value="NM_001416783.1"/>
</dbReference>
<dbReference type="RefSeq" id="NP_001403713.1">
    <property type="nucleotide sequence ID" value="NM_001416784.1"/>
</dbReference>
<dbReference type="RefSeq" id="NP_034191.3">
    <property type="nucleotide sequence ID" value="NM_010061.5"/>
</dbReference>
<dbReference type="RefSeq" id="XP_006521837.1">
    <property type="nucleotide sequence ID" value="XM_006521774.3"/>
</dbReference>
<dbReference type="RefSeq" id="XP_006521838.1">
    <property type="nucleotide sequence ID" value="XM_006521775.3"/>
</dbReference>
<dbReference type="RefSeq" id="XP_006521839.1">
    <property type="nucleotide sequence ID" value="XM_006521776.3"/>
</dbReference>
<dbReference type="SMR" id="P49183"/>
<dbReference type="FunCoup" id="P49183">
    <property type="interactions" value="712"/>
</dbReference>
<dbReference type="IntAct" id="P49183">
    <property type="interactions" value="1"/>
</dbReference>
<dbReference type="STRING" id="10090.ENSMUSP00000006136"/>
<dbReference type="GlyCosmos" id="P49183">
    <property type="glycosylation" value="2 sites, No reported glycans"/>
</dbReference>
<dbReference type="GlyGen" id="P49183">
    <property type="glycosylation" value="3 sites"/>
</dbReference>
<dbReference type="iPTMnet" id="P49183"/>
<dbReference type="PhosphoSitePlus" id="P49183"/>
<dbReference type="PaxDb" id="10090-ENSMUSP00000006136"/>
<dbReference type="ProteomicsDB" id="279390"/>
<dbReference type="Pumba" id="P49183"/>
<dbReference type="Antibodypedia" id="10879">
    <property type="antibodies" value="285 antibodies from 32 providers"/>
</dbReference>
<dbReference type="DNASU" id="13419"/>
<dbReference type="Ensembl" id="ENSMUST00000006136.11">
    <property type="protein sequence ID" value="ENSMUSP00000006136.5"/>
    <property type="gene ID" value="ENSMUSG00000005980.16"/>
</dbReference>
<dbReference type="Ensembl" id="ENSMUST00000120009.8">
    <property type="protein sequence ID" value="ENSMUSP00000113119.2"/>
    <property type="gene ID" value="ENSMUSG00000005980.16"/>
</dbReference>
<dbReference type="GeneID" id="13419"/>
<dbReference type="KEGG" id="mmu:13419"/>
<dbReference type="UCSC" id="uc007xzh.1">
    <property type="organism name" value="mouse"/>
</dbReference>
<dbReference type="AGR" id="MGI:103157"/>
<dbReference type="CTD" id="1773"/>
<dbReference type="MGI" id="MGI:103157">
    <property type="gene designation" value="Dnase1"/>
</dbReference>
<dbReference type="VEuPathDB" id="HostDB:ENSMUSG00000005980"/>
<dbReference type="eggNOG" id="ENOG502QQFT">
    <property type="taxonomic scope" value="Eukaryota"/>
</dbReference>
<dbReference type="GeneTree" id="ENSGT00950000182846"/>
<dbReference type="HOGENOM" id="CLU_043335_2_1_1"/>
<dbReference type="InParanoid" id="P49183"/>
<dbReference type="OMA" id="YHFVVSE"/>
<dbReference type="OrthoDB" id="10061407at2759"/>
<dbReference type="PhylomeDB" id="P49183"/>
<dbReference type="TreeFam" id="TF329541"/>
<dbReference type="BRENDA" id="3.1.21.1">
    <property type="organism ID" value="3474"/>
</dbReference>
<dbReference type="BioGRID-ORCS" id="13419">
    <property type="hits" value="3 hits in 79 CRISPR screens"/>
</dbReference>
<dbReference type="ChiTaRS" id="Dnase1">
    <property type="organism name" value="mouse"/>
</dbReference>
<dbReference type="PRO" id="PR:P49183"/>
<dbReference type="Proteomes" id="UP000000589">
    <property type="component" value="Chromosome 16"/>
</dbReference>
<dbReference type="RNAct" id="P49183">
    <property type="molecule type" value="protein"/>
</dbReference>
<dbReference type="Bgee" id="ENSMUSG00000005980">
    <property type="expression patterns" value="Expressed in parotid gland and 92 other cell types or tissues"/>
</dbReference>
<dbReference type="ExpressionAtlas" id="P49183">
    <property type="expression patterns" value="baseline and differential"/>
</dbReference>
<dbReference type="GO" id="GO:0005576">
    <property type="term" value="C:extracellular region"/>
    <property type="evidence" value="ECO:0007669"/>
    <property type="project" value="UniProtKB-SubCell"/>
</dbReference>
<dbReference type="GO" id="GO:0005635">
    <property type="term" value="C:nuclear envelope"/>
    <property type="evidence" value="ECO:0007669"/>
    <property type="project" value="UniProtKB-SubCell"/>
</dbReference>
<dbReference type="GO" id="GO:0042588">
    <property type="term" value="C:zymogen granule"/>
    <property type="evidence" value="ECO:0007669"/>
    <property type="project" value="UniProtKB-SubCell"/>
</dbReference>
<dbReference type="GO" id="GO:0003779">
    <property type="term" value="F:actin binding"/>
    <property type="evidence" value="ECO:0007669"/>
    <property type="project" value="UniProtKB-KW"/>
</dbReference>
<dbReference type="GO" id="GO:0004530">
    <property type="term" value="F:deoxyribonuclease I activity"/>
    <property type="evidence" value="ECO:0000315"/>
    <property type="project" value="CACAO"/>
</dbReference>
<dbReference type="GO" id="GO:0006915">
    <property type="term" value="P:apoptotic process"/>
    <property type="evidence" value="ECO:0007669"/>
    <property type="project" value="UniProtKB-KW"/>
</dbReference>
<dbReference type="GO" id="GO:0006308">
    <property type="term" value="P:DNA catabolic process"/>
    <property type="evidence" value="ECO:0000314"/>
    <property type="project" value="UniProtKB"/>
</dbReference>
<dbReference type="GO" id="GO:0002283">
    <property type="term" value="P:neutrophil activation involved in immune response"/>
    <property type="evidence" value="ECO:0000314"/>
    <property type="project" value="UniProtKB"/>
</dbReference>
<dbReference type="GO" id="GO:0002673">
    <property type="term" value="P:regulation of acute inflammatory response"/>
    <property type="evidence" value="ECO:0000314"/>
    <property type="project" value="UniProtKB"/>
</dbReference>
<dbReference type="GO" id="GO:0070948">
    <property type="term" value="P:regulation of neutrophil mediated cytotoxicity"/>
    <property type="evidence" value="ECO:0000314"/>
    <property type="project" value="UniProtKB"/>
</dbReference>
<dbReference type="CDD" id="cd10282">
    <property type="entry name" value="DNase1"/>
    <property type="match status" value="1"/>
</dbReference>
<dbReference type="FunFam" id="3.60.10.10:FF:000035">
    <property type="entry name" value="Deoxyribonuclease"/>
    <property type="match status" value="1"/>
</dbReference>
<dbReference type="Gene3D" id="3.60.10.10">
    <property type="entry name" value="Endonuclease/exonuclease/phosphatase"/>
    <property type="match status" value="1"/>
</dbReference>
<dbReference type="InterPro" id="IPR018057">
    <property type="entry name" value="Deoxyribonuclease-1_AS"/>
</dbReference>
<dbReference type="InterPro" id="IPR016202">
    <property type="entry name" value="DNase_I"/>
</dbReference>
<dbReference type="InterPro" id="IPR033125">
    <property type="entry name" value="DNASE_I_2"/>
</dbReference>
<dbReference type="InterPro" id="IPR036691">
    <property type="entry name" value="Endo/exonu/phosph_ase_sf"/>
</dbReference>
<dbReference type="InterPro" id="IPR005135">
    <property type="entry name" value="Endo/exonuclease/phosphatase"/>
</dbReference>
<dbReference type="PANTHER" id="PTHR11371">
    <property type="entry name" value="DEOXYRIBONUCLEASE"/>
    <property type="match status" value="1"/>
</dbReference>
<dbReference type="PANTHER" id="PTHR11371:SF27">
    <property type="entry name" value="DEOXYRIBONUCLEASE-1"/>
    <property type="match status" value="1"/>
</dbReference>
<dbReference type="Pfam" id="PF03372">
    <property type="entry name" value="Exo_endo_phos"/>
    <property type="match status" value="1"/>
</dbReference>
<dbReference type="PIRSF" id="PIRSF000988">
    <property type="entry name" value="DNase_I_euk"/>
    <property type="match status" value="1"/>
</dbReference>
<dbReference type="PRINTS" id="PR00130">
    <property type="entry name" value="DNASEI"/>
</dbReference>
<dbReference type="SMART" id="SM00476">
    <property type="entry name" value="DNaseIc"/>
    <property type="match status" value="1"/>
</dbReference>
<dbReference type="SUPFAM" id="SSF56219">
    <property type="entry name" value="DNase I-like"/>
    <property type="match status" value="1"/>
</dbReference>
<dbReference type="PROSITE" id="PS00919">
    <property type="entry name" value="DNASE_I_1"/>
    <property type="match status" value="1"/>
</dbReference>
<dbReference type="PROSITE" id="PS00918">
    <property type="entry name" value="DNASE_I_2"/>
    <property type="match status" value="1"/>
</dbReference>
<gene>
    <name evidence="11" type="primary">Dnase1</name>
    <name type="synonym">Dnl1</name>
</gene>
<keyword id="KW-0009">Actin-binding</keyword>
<keyword id="KW-0053">Apoptosis</keyword>
<keyword id="KW-0106">Calcium</keyword>
<keyword id="KW-0968">Cytoplasmic vesicle</keyword>
<keyword id="KW-1015">Disulfide bond</keyword>
<keyword id="KW-0255">Endonuclease</keyword>
<keyword id="KW-0325">Glycoprotein</keyword>
<keyword id="KW-0378">Hydrolase</keyword>
<keyword id="KW-0540">Nuclease</keyword>
<keyword id="KW-0539">Nucleus</keyword>
<keyword id="KW-1185">Reference proteome</keyword>
<keyword id="KW-0964">Secreted</keyword>
<keyword id="KW-0732">Signal</keyword>
<sequence>MRYTGLMGTLLTLVNLLQLAGTLRIAAFNIRTFGETKMSNATLSVYFVKILSRYDIAVIQEVRDSHLVAVGKLLDELNRDKPDTYRYVVSEPLGRKSYKEQYLFVYRPDQVSILDSYQYDDGCEPCGNDTFSREPAIVKFFSPYTEVQEFAIVPLHAAPTEAVSEIDALYDVYLDVWQKWGLEDIMFMGDFNAGCSYVTSSQWSSIRLRTSPIFQWLIPDSADTTVTSTHCAYDRIVVAGALLQAAVVPNSAVPFDFQAEYGLSNQLAEAISDHYPVEVTLRKI</sequence>
<comment type="function">
    <text evidence="1 2 3 7">Serum endocuclease secreted into body fluids by a wide variety of exocrine and endocrine organs (PubMed:29191910). Expressed by non-hematopoietic tissues and preferentially cleaves protein-free DNA. Among other functions, seems to be involved in cell death by apoptosis. Binds specifically to G-actin and blocks actin polymerization (By similarity). Together with DNASE1L3, plays a key role in degrading neutrophil extracellular traps (NETs) (PubMed:29191910). NETs are mainly composed of DNA fibers and are released by neutrophils to bind pathogens during inflammation (PubMed:29191910). Degradation of intravascular NETs by DNASE1 and DNASE1L3 is required to prevent formation of clots that obstruct blood vessels and cause organ damage following inflammation (PubMed:29191910).</text>
</comment>
<comment type="catalytic activity">
    <reaction evidence="3">
        <text>Endonucleolytic cleavage to 5'-phosphodinucleotide and 5'-phosphooligonucleotide end-products.</text>
        <dbReference type="EC" id="3.1.21.1"/>
    </reaction>
</comment>
<comment type="cofactor">
    <cofactor evidence="3">
        <name>Ca(2+)</name>
        <dbReference type="ChEBI" id="CHEBI:29108"/>
    </cofactor>
    <cofactor evidence="3">
        <name>Mg(2+)</name>
        <dbReference type="ChEBI" id="CHEBI:18420"/>
    </cofactor>
    <text evidence="3">Divalent metal cations. Prefers Ca(2+) or Mg(2+).</text>
</comment>
<comment type="subcellular location">
    <subcellularLocation>
        <location evidence="3">Secreted</location>
    </subcellularLocation>
    <subcellularLocation>
        <location evidence="3">Zymogen granule</location>
    </subcellularLocation>
    <subcellularLocation>
        <location evidence="3">Nucleus envelope</location>
    </subcellularLocation>
    <text evidence="3">Secretory protein, stored in zymogen granules and found in the nuclear envelope.</text>
</comment>
<comment type="tissue specificity">
    <text evidence="6 8 9">Highly expressed in the parotid and submandibular gland as well as in the kidney and duodenum (at protein level) (PubMed:15015938). Expressed at intermediate level in the ileum, mesenterial lymph nodes, liver, ventral prostate, epididymis, ovary and stomach (at protein level) (PubMed:15015938). Expressed at low level in the sublingual, preputial, coagulation and pituitary gland (at protein level) (PubMed:15015938). Also present in the lachrymal and thyroid glands, striated muscle, intestine, the urinary bladder and the eye (PubMed:15015938, PubMed:7857306, PubMed:9192086).</text>
</comment>
<comment type="PTM">
    <text evidence="6">N-glycosylated.</text>
</comment>
<comment type="disruption phenotype">
    <text evidence="5 7">Mice develop symptoms of the autoimmune disease systemic lupus erythematosus, characterized by high titers of anti-nuclear autoantibodies (ANA) directed against nucleosomes and double-stranded DNA, the deposition of immune complexes in glomeruli and full-blown glomerulonephritis (PubMed:10835632). Mice lacking both Dnase1 and Dnase1l3 show vascular occlusions following bacterial infection: defects are caused by the formation of intravascular neutrophil extracellular traps (NETs) clots that obstruct blood vessels and cause organ damage (PubMed:29191910).</text>
</comment>
<comment type="similarity">
    <text evidence="10">Belongs to the DNase I family.</text>
</comment>
<reference key="1">
    <citation type="journal article" date="1995" name="Biochem. Biophys. Res. Commun.">
        <title>Genomic organisation and expression of mouse deoxyribonuclease I.</title>
        <authorList>
            <person name="Peitsch M.C."/>
            <person name="Irmler M."/>
            <person name="French L.E."/>
            <person name="Tschopp J."/>
        </authorList>
    </citation>
    <scope>NUCLEOTIDE SEQUENCE [MRNA]</scope>
    <scope>TISSUE SPECIFICITY</scope>
    <source>
        <strain>BALB/cJ</strain>
        <tissue>Heart</tissue>
    </source>
</reference>
<reference key="2">
    <citation type="journal article" date="1997" name="Biochem. Mol. Biol. Int.">
        <title>Mouse deoxyribonuclease I (DNase I): biochemical and immunological characterization, cDNA structure and tissue distribution.</title>
        <authorList>
            <person name="Takeshita H."/>
            <person name="Yasuda T."/>
            <person name="Nakajima T."/>
            <person name="Hosomi O."/>
            <person name="Nakashima Y."/>
            <person name="Kishi K."/>
        </authorList>
    </citation>
    <scope>NUCLEOTIDE SEQUENCE [MRNA]</scope>
    <scope>TISSUE SPECIFICITY</scope>
    <source>
        <strain>BALB/cJ</strain>
        <tissue>Kidney</tissue>
        <tissue>Parotid gland</tissue>
    </source>
</reference>
<reference key="3">
    <citation type="journal article" date="2000" name="Nat. Genet.">
        <title>Features of systemic lupus erythematosus in Dnase1-deficient mice.</title>
        <authorList>
            <person name="Napirei M."/>
            <person name="Karsunky H."/>
            <person name="Zevnik B."/>
            <person name="Stephan H."/>
            <person name="Mannherz H.G."/>
            <person name="Moeroey T."/>
        </authorList>
    </citation>
    <scope>DISRUPTION PHENOTYPE</scope>
</reference>
<reference key="4">
    <citation type="journal article" date="2004" name="Biochem. J.">
        <title>Expression pattern of the deoxyribonuclease 1 gene: lessons from the Dnase1 knockout mouse.</title>
        <authorList>
            <person name="Napirei M."/>
            <person name="Ricken A."/>
            <person name="Eulitz D."/>
            <person name="Knoop H."/>
            <person name="Mannherz H.G."/>
        </authorList>
    </citation>
    <scope>TISSUE SPECIFICITY</scope>
    <scope>GLYCOSYLATION</scope>
</reference>
<reference key="5">
    <citation type="journal article" date="2010" name="Cell">
        <title>A tissue-specific atlas of mouse protein phosphorylation and expression.</title>
        <authorList>
            <person name="Huttlin E.L."/>
            <person name="Jedrychowski M.P."/>
            <person name="Elias J.E."/>
            <person name="Goswami T."/>
            <person name="Rad R."/>
            <person name="Beausoleil S.A."/>
            <person name="Villen J."/>
            <person name="Haas W."/>
            <person name="Sowa M.E."/>
            <person name="Gygi S.P."/>
        </authorList>
    </citation>
    <scope>IDENTIFICATION BY MASS SPECTROMETRY [LARGE SCALE ANALYSIS]</scope>
    <source>
        <tissue>Kidney</tissue>
    </source>
</reference>
<reference key="6">
    <citation type="journal article" date="2017" name="Science">
        <title>Host DNases prevent vascular occlusion by neutrophil extracellular traps.</title>
        <authorList>
            <person name="Jimenez-Alcazar M."/>
            <person name="Rangaswamy C."/>
            <person name="Panda R."/>
            <person name="Bitterling J."/>
            <person name="Simsek Y.J."/>
            <person name="Long A.T."/>
            <person name="Bilyy R."/>
            <person name="Krenn V."/>
            <person name="Renne C."/>
            <person name="Renne T."/>
            <person name="Kluge S."/>
            <person name="Panzer U."/>
            <person name="Mizuta R."/>
            <person name="Mannherz H.G."/>
            <person name="Kitamura D."/>
            <person name="Herrmann M."/>
            <person name="Napirei M."/>
            <person name="Fuchs T.A."/>
        </authorList>
    </citation>
    <scope>FUNCTION</scope>
    <scope>DISRUPTION PHENOTYPE</scope>
</reference>
<protein>
    <recommendedName>
        <fullName>Deoxyribonuclease-1</fullName>
        <ecNumber evidence="3">3.1.21.1</ecNumber>
    </recommendedName>
    <alternativeName>
        <fullName>Deoxyribonuclease I</fullName>
        <shortName>DNase I</shortName>
    </alternativeName>
</protein>
<name>DNAS1_MOUSE</name>
<feature type="signal peptide" evidence="1">
    <location>
        <begin position="1"/>
        <end position="22"/>
    </location>
</feature>
<feature type="chain" id="PRO_0000007278" description="Deoxyribonuclease-1">
    <location>
        <begin position="23"/>
        <end position="284"/>
    </location>
</feature>
<feature type="active site" evidence="1">
    <location>
        <position position="100"/>
    </location>
</feature>
<feature type="active site" evidence="1">
    <location>
        <position position="156"/>
    </location>
</feature>
<feature type="site" description="Involved in actin-binding" evidence="1">
    <location>
        <position position="35"/>
    </location>
</feature>
<feature type="site" description="Nitration by tetranitromethane destroys a Ca(2+) binding site and inactivates enzyme" evidence="1">
    <location>
        <position position="87"/>
    </location>
</feature>
<feature type="site" description="Involved in actin-binding" evidence="1">
    <location>
        <position position="89"/>
    </location>
</feature>
<feature type="glycosylation site" description="N-linked (GlcNAc...) asparagine" evidence="4">
    <location>
        <position position="40"/>
    </location>
</feature>
<feature type="glycosylation site" description="N-linked (GlcNAc...) asparagine" evidence="4">
    <location>
        <position position="128"/>
    </location>
</feature>
<feature type="disulfide bond" evidence="1">
    <location>
        <begin position="123"/>
        <end position="126"/>
    </location>
</feature>
<feature type="disulfide bond" description="Essential for enzymatic activity" evidence="1">
    <location>
        <begin position="195"/>
        <end position="231"/>
    </location>
</feature>
<feature type="sequence conflict" description="In Ref. 1; AAA03710." evidence="10" ref="1">
    <original>AG</original>
    <variation>VR</variation>
    <location>
        <begin position="239"/>
        <end position="240"/>
    </location>
</feature>
<proteinExistence type="evidence at protein level"/>
<organism>
    <name type="scientific">Mus musculus</name>
    <name type="common">Mouse</name>
    <dbReference type="NCBI Taxonomy" id="10090"/>
    <lineage>
        <taxon>Eukaryota</taxon>
        <taxon>Metazoa</taxon>
        <taxon>Chordata</taxon>
        <taxon>Craniata</taxon>
        <taxon>Vertebrata</taxon>
        <taxon>Euteleostomi</taxon>
        <taxon>Mammalia</taxon>
        <taxon>Eutheria</taxon>
        <taxon>Euarchontoglires</taxon>
        <taxon>Glires</taxon>
        <taxon>Rodentia</taxon>
        <taxon>Myomorpha</taxon>
        <taxon>Muroidea</taxon>
        <taxon>Muridae</taxon>
        <taxon>Murinae</taxon>
        <taxon>Mus</taxon>
        <taxon>Mus</taxon>
    </lineage>
</organism>